<organism>
    <name type="scientific">Staphylococcus aureus (strain COL)</name>
    <dbReference type="NCBI Taxonomy" id="93062"/>
    <lineage>
        <taxon>Bacteria</taxon>
        <taxon>Bacillati</taxon>
        <taxon>Bacillota</taxon>
        <taxon>Bacilli</taxon>
        <taxon>Bacillales</taxon>
        <taxon>Staphylococcaceae</taxon>
        <taxon>Staphylococcus</taxon>
    </lineage>
</organism>
<reference key="1">
    <citation type="journal article" date="2005" name="J. Bacteriol.">
        <title>Insights on evolution of virulence and resistance from the complete genome analysis of an early methicillin-resistant Staphylococcus aureus strain and a biofilm-producing methicillin-resistant Staphylococcus epidermidis strain.</title>
        <authorList>
            <person name="Gill S.R."/>
            <person name="Fouts D.E."/>
            <person name="Archer G.L."/>
            <person name="Mongodin E.F."/>
            <person name="DeBoy R.T."/>
            <person name="Ravel J."/>
            <person name="Paulsen I.T."/>
            <person name="Kolonay J.F."/>
            <person name="Brinkac L.M."/>
            <person name="Beanan M.J."/>
            <person name="Dodson R.J."/>
            <person name="Daugherty S.C."/>
            <person name="Madupu R."/>
            <person name="Angiuoli S.V."/>
            <person name="Durkin A.S."/>
            <person name="Haft D.H."/>
            <person name="Vamathevan J.J."/>
            <person name="Khouri H."/>
            <person name="Utterback T.R."/>
            <person name="Lee C."/>
            <person name="Dimitrov G."/>
            <person name="Jiang L."/>
            <person name="Qin H."/>
            <person name="Weidman J."/>
            <person name="Tran K."/>
            <person name="Kang K.H."/>
            <person name="Hance I.R."/>
            <person name="Nelson K.E."/>
            <person name="Fraser C.M."/>
        </authorList>
    </citation>
    <scope>NUCLEOTIDE SEQUENCE [LARGE SCALE GENOMIC DNA]</scope>
    <source>
        <strain>COL</strain>
    </source>
</reference>
<reference key="2">
    <citation type="journal article" date="2007" name="J. Bacteriol.">
        <title>Anaerobic gene expression in Staphylococcus aureus.</title>
        <authorList>
            <person name="Fuchs S."/>
            <person name="Pane-Farre J."/>
            <person name="Kohler C."/>
            <person name="Hecker M."/>
            <person name="Engelmann S."/>
        </authorList>
    </citation>
    <scope>INDUCTION DURING ANAEROBIC GROWTH</scope>
</reference>
<gene>
    <name type="ordered locus">SACOL2006</name>
</gene>
<proteinExistence type="evidence at transcript level"/>
<name>LUKL2_STAAC</name>
<protein>
    <recommendedName>
        <fullName>Uncharacterized leukocidin-like protein 2</fullName>
    </recommendedName>
</protein>
<accession>Q5HEH9</accession>
<evidence type="ECO:0000255" key="1"/>
<evidence type="ECO:0000256" key="2">
    <source>
        <dbReference type="SAM" id="MobiDB-lite"/>
    </source>
</evidence>
<evidence type="ECO:0000269" key="3">
    <source>
    </source>
</evidence>
<evidence type="ECO:0000305" key="4"/>
<dbReference type="EMBL" id="CP000046">
    <property type="protein sequence ID" value="AAW36974.1"/>
    <property type="molecule type" value="Genomic_DNA"/>
</dbReference>
<dbReference type="SASBDB" id="Q5HEH9"/>
<dbReference type="SMR" id="Q5HEH9"/>
<dbReference type="ABCD" id="Q5HEH9">
    <property type="antibodies" value="4 sequenced antibodies"/>
</dbReference>
<dbReference type="KEGG" id="sac:SACOL2006"/>
<dbReference type="HOGENOM" id="CLU_865755_0_0_9"/>
<dbReference type="Proteomes" id="UP000000530">
    <property type="component" value="Chromosome"/>
</dbReference>
<dbReference type="GO" id="GO:0005576">
    <property type="term" value="C:extracellular region"/>
    <property type="evidence" value="ECO:0007669"/>
    <property type="project" value="InterPro"/>
</dbReference>
<dbReference type="GO" id="GO:0051715">
    <property type="term" value="P:cytolysis in another organism"/>
    <property type="evidence" value="ECO:0007669"/>
    <property type="project" value="InterPro"/>
</dbReference>
<dbReference type="Gene3D" id="2.70.240.10">
    <property type="entry name" value="Leukocidin/porin MspA"/>
    <property type="match status" value="1"/>
</dbReference>
<dbReference type="InterPro" id="IPR003963">
    <property type="entry name" value="Bi-component_toxin_staph"/>
</dbReference>
<dbReference type="InterPro" id="IPR016183">
    <property type="entry name" value="Leukocidin/Hemolysin_toxin"/>
</dbReference>
<dbReference type="InterPro" id="IPR036435">
    <property type="entry name" value="Leukocidin/porin_MspA_sf"/>
</dbReference>
<dbReference type="Pfam" id="PF07968">
    <property type="entry name" value="Leukocidin"/>
    <property type="match status" value="1"/>
</dbReference>
<dbReference type="PRINTS" id="PR01468">
    <property type="entry name" value="BICOMPNTOXIN"/>
</dbReference>
<dbReference type="SUPFAM" id="SSF56959">
    <property type="entry name" value="Leukocidin-like"/>
    <property type="match status" value="1"/>
</dbReference>
<sequence length="351" mass="40434">MKNKKRVLIASSLSCAILLLSAATTQANSAHKDSQDQNKKEHVDKSQQKDKRNVTNKDKNSTAPDDIGKNGKITKRTETVYDEKTNILQNLQFDFIDDPTYDKNVLLVKKQGSIHSNLKFESHKEEKNSNWLKYPSEYHVDFQVKRNRKTEILDQLPKNKISTAKVDSTFSYSSGGKFDSTKGIGRTSSNSYSKTISYNQQNYDTIASGKNNNWHVHWSVIANDLKYGGEVKNRNDELLFYRNTRIATVENPELSFASKYRYPALVRSGFNPEFLTYLSNEKSNEKTQFEVTYTRNQDILKNRPGIHYAPPILEKNKDGQRLIVTYEVDWKNKTVKVVDKYSDDNKPYKEG</sequence>
<feature type="signal peptide" evidence="1">
    <location>
        <begin position="1"/>
        <end position="27"/>
    </location>
</feature>
<feature type="chain" id="PRO_0000298640" description="Uncharacterized leukocidin-like protein 2">
    <location>
        <begin position="28"/>
        <end position="351"/>
    </location>
</feature>
<feature type="region of interest" description="Disordered" evidence="2">
    <location>
        <begin position="27"/>
        <end position="71"/>
    </location>
</feature>
<feature type="compositionally biased region" description="Basic and acidic residues" evidence="2">
    <location>
        <begin position="30"/>
        <end position="60"/>
    </location>
</feature>
<comment type="induction">
    <text evidence="3">Up-regulated during anaerobic growth.</text>
</comment>
<comment type="similarity">
    <text evidence="4">Belongs to the aerolysin family.</text>
</comment>
<keyword id="KW-0732">Signal</keyword>